<evidence type="ECO:0000255" key="1">
    <source>
        <dbReference type="HAMAP-Rule" id="MF_01690"/>
    </source>
</evidence>
<evidence type="ECO:0000305" key="2"/>
<organism>
    <name type="scientific">Methylobacterium nodulans (strain LMG 21967 / CNCM I-2342 / ORS 2060)</name>
    <dbReference type="NCBI Taxonomy" id="460265"/>
    <lineage>
        <taxon>Bacteria</taxon>
        <taxon>Pseudomonadati</taxon>
        <taxon>Pseudomonadota</taxon>
        <taxon>Alphaproteobacteria</taxon>
        <taxon>Hyphomicrobiales</taxon>
        <taxon>Methylobacteriaceae</taxon>
        <taxon>Methylobacterium</taxon>
    </lineage>
</organism>
<keyword id="KW-0028">Amino-acid biosynthesis</keyword>
<keyword id="KW-0170">Cobalt</keyword>
<keyword id="KW-0220">Diaminopimelate biosynthesis</keyword>
<keyword id="KW-0378">Hydrolase</keyword>
<keyword id="KW-0457">Lysine biosynthesis</keyword>
<keyword id="KW-0479">Metal-binding</keyword>
<keyword id="KW-1185">Reference proteome</keyword>
<keyword id="KW-0862">Zinc</keyword>
<proteinExistence type="inferred from homology"/>
<dbReference type="EC" id="3.5.1.18" evidence="1"/>
<dbReference type="EMBL" id="CP001349">
    <property type="protein sequence ID" value="ACL59610.1"/>
    <property type="status" value="ALT_INIT"/>
    <property type="molecule type" value="Genomic_DNA"/>
</dbReference>
<dbReference type="SMR" id="B8IFQ0"/>
<dbReference type="STRING" id="460265.Mnod_4745"/>
<dbReference type="KEGG" id="mno:Mnod_4745"/>
<dbReference type="eggNOG" id="COG0624">
    <property type="taxonomic scope" value="Bacteria"/>
</dbReference>
<dbReference type="HOGENOM" id="CLU_021802_4_0_5"/>
<dbReference type="OrthoDB" id="9809784at2"/>
<dbReference type="UniPathway" id="UPA00034">
    <property type="reaction ID" value="UER00021"/>
</dbReference>
<dbReference type="Proteomes" id="UP000008207">
    <property type="component" value="Chromosome"/>
</dbReference>
<dbReference type="GO" id="GO:0008777">
    <property type="term" value="F:acetylornithine deacetylase activity"/>
    <property type="evidence" value="ECO:0007669"/>
    <property type="project" value="TreeGrafter"/>
</dbReference>
<dbReference type="GO" id="GO:0050897">
    <property type="term" value="F:cobalt ion binding"/>
    <property type="evidence" value="ECO:0007669"/>
    <property type="project" value="UniProtKB-UniRule"/>
</dbReference>
<dbReference type="GO" id="GO:0009014">
    <property type="term" value="F:succinyl-diaminopimelate desuccinylase activity"/>
    <property type="evidence" value="ECO:0007669"/>
    <property type="project" value="UniProtKB-UniRule"/>
</dbReference>
<dbReference type="GO" id="GO:0008270">
    <property type="term" value="F:zinc ion binding"/>
    <property type="evidence" value="ECO:0007669"/>
    <property type="project" value="UniProtKB-UniRule"/>
</dbReference>
<dbReference type="GO" id="GO:0019877">
    <property type="term" value="P:diaminopimelate biosynthetic process"/>
    <property type="evidence" value="ECO:0007669"/>
    <property type="project" value="UniProtKB-UniRule"/>
</dbReference>
<dbReference type="GO" id="GO:0006526">
    <property type="term" value="P:L-arginine biosynthetic process"/>
    <property type="evidence" value="ECO:0007669"/>
    <property type="project" value="TreeGrafter"/>
</dbReference>
<dbReference type="GO" id="GO:0009089">
    <property type="term" value="P:lysine biosynthetic process via diaminopimelate"/>
    <property type="evidence" value="ECO:0007669"/>
    <property type="project" value="UniProtKB-UniRule"/>
</dbReference>
<dbReference type="CDD" id="cd03891">
    <property type="entry name" value="M20_DapE_proteobac"/>
    <property type="match status" value="1"/>
</dbReference>
<dbReference type="Gene3D" id="3.40.630.10">
    <property type="entry name" value="Zn peptidases"/>
    <property type="match status" value="2"/>
</dbReference>
<dbReference type="HAMAP" id="MF_01690">
    <property type="entry name" value="DapE"/>
    <property type="match status" value="1"/>
</dbReference>
<dbReference type="InterPro" id="IPR001261">
    <property type="entry name" value="ArgE/DapE_CS"/>
</dbReference>
<dbReference type="InterPro" id="IPR036264">
    <property type="entry name" value="Bact_exopeptidase_dim_dom"/>
</dbReference>
<dbReference type="InterPro" id="IPR005941">
    <property type="entry name" value="DapE_proteobac"/>
</dbReference>
<dbReference type="InterPro" id="IPR002933">
    <property type="entry name" value="Peptidase_M20"/>
</dbReference>
<dbReference type="InterPro" id="IPR011650">
    <property type="entry name" value="Peptidase_M20_dimer"/>
</dbReference>
<dbReference type="InterPro" id="IPR050072">
    <property type="entry name" value="Peptidase_M20A"/>
</dbReference>
<dbReference type="NCBIfam" id="TIGR01246">
    <property type="entry name" value="dapE_proteo"/>
    <property type="match status" value="1"/>
</dbReference>
<dbReference type="NCBIfam" id="NF009557">
    <property type="entry name" value="PRK13009.1"/>
    <property type="match status" value="1"/>
</dbReference>
<dbReference type="PANTHER" id="PTHR43808">
    <property type="entry name" value="ACETYLORNITHINE DEACETYLASE"/>
    <property type="match status" value="1"/>
</dbReference>
<dbReference type="PANTHER" id="PTHR43808:SF31">
    <property type="entry name" value="N-ACETYL-L-CITRULLINE DEACETYLASE"/>
    <property type="match status" value="1"/>
</dbReference>
<dbReference type="Pfam" id="PF07687">
    <property type="entry name" value="M20_dimer"/>
    <property type="match status" value="1"/>
</dbReference>
<dbReference type="Pfam" id="PF01546">
    <property type="entry name" value="Peptidase_M20"/>
    <property type="match status" value="1"/>
</dbReference>
<dbReference type="SUPFAM" id="SSF55031">
    <property type="entry name" value="Bacterial exopeptidase dimerisation domain"/>
    <property type="match status" value="1"/>
</dbReference>
<dbReference type="SUPFAM" id="SSF53187">
    <property type="entry name" value="Zn-dependent exopeptidases"/>
    <property type="match status" value="1"/>
</dbReference>
<dbReference type="PROSITE" id="PS00758">
    <property type="entry name" value="ARGE_DAPE_CPG2_1"/>
    <property type="match status" value="1"/>
</dbReference>
<gene>
    <name evidence="1" type="primary">dapE</name>
    <name type="ordered locus">Mnod_4745</name>
</gene>
<feature type="chain" id="PRO_0000375614" description="Succinyl-diaminopimelate desuccinylase">
    <location>
        <begin position="1"/>
        <end position="396"/>
    </location>
</feature>
<feature type="active site" evidence="1">
    <location>
        <position position="76"/>
    </location>
</feature>
<feature type="active site" description="Proton acceptor" evidence="1">
    <location>
        <position position="142"/>
    </location>
</feature>
<feature type="binding site" evidence="1">
    <location>
        <position position="74"/>
    </location>
    <ligand>
        <name>Zn(2+)</name>
        <dbReference type="ChEBI" id="CHEBI:29105"/>
        <label>1</label>
    </ligand>
</feature>
<feature type="binding site" evidence="1">
    <location>
        <position position="107"/>
    </location>
    <ligand>
        <name>Zn(2+)</name>
        <dbReference type="ChEBI" id="CHEBI:29105"/>
        <label>1</label>
    </ligand>
</feature>
<feature type="binding site" evidence="1">
    <location>
        <position position="107"/>
    </location>
    <ligand>
        <name>Zn(2+)</name>
        <dbReference type="ChEBI" id="CHEBI:29105"/>
        <label>2</label>
    </ligand>
</feature>
<feature type="binding site" evidence="1">
    <location>
        <position position="143"/>
    </location>
    <ligand>
        <name>Zn(2+)</name>
        <dbReference type="ChEBI" id="CHEBI:29105"/>
        <label>2</label>
    </ligand>
</feature>
<feature type="binding site" evidence="1">
    <location>
        <position position="171"/>
    </location>
    <ligand>
        <name>Zn(2+)</name>
        <dbReference type="ChEBI" id="CHEBI:29105"/>
        <label>1</label>
    </ligand>
</feature>
<feature type="binding site" evidence="1">
    <location>
        <position position="360"/>
    </location>
    <ligand>
        <name>Zn(2+)</name>
        <dbReference type="ChEBI" id="CHEBI:29105"/>
        <label>2</label>
    </ligand>
</feature>
<protein>
    <recommendedName>
        <fullName evidence="1">Succinyl-diaminopimelate desuccinylase</fullName>
        <shortName evidence="1">SDAP desuccinylase</shortName>
        <ecNumber evidence="1">3.5.1.18</ecNumber>
    </recommendedName>
    <alternativeName>
        <fullName evidence="1">N-succinyl-LL-2,6-diaminoheptanedioate amidohydrolase</fullName>
    </alternativeName>
</protein>
<comment type="function">
    <text evidence="1">Catalyzes the hydrolysis of N-succinyl-L,L-diaminopimelic acid (SDAP), forming succinate and LL-2,6-diaminopimelate (DAP), an intermediate involved in the bacterial biosynthesis of lysine and meso-diaminopimelic acid, an essential component of bacterial cell walls.</text>
</comment>
<comment type="catalytic activity">
    <reaction evidence="1">
        <text>N-succinyl-(2S,6S)-2,6-diaminopimelate + H2O = (2S,6S)-2,6-diaminopimelate + succinate</text>
        <dbReference type="Rhea" id="RHEA:22608"/>
        <dbReference type="ChEBI" id="CHEBI:15377"/>
        <dbReference type="ChEBI" id="CHEBI:30031"/>
        <dbReference type="ChEBI" id="CHEBI:57609"/>
        <dbReference type="ChEBI" id="CHEBI:58087"/>
        <dbReference type="EC" id="3.5.1.18"/>
    </reaction>
</comment>
<comment type="cofactor">
    <cofactor evidence="1">
        <name>Zn(2+)</name>
        <dbReference type="ChEBI" id="CHEBI:29105"/>
    </cofactor>
    <cofactor evidence="1">
        <name>Co(2+)</name>
        <dbReference type="ChEBI" id="CHEBI:48828"/>
    </cofactor>
    <text evidence="1">Binds 2 Zn(2+) or Co(2+) ions per subunit.</text>
</comment>
<comment type="pathway">
    <text evidence="1">Amino-acid biosynthesis; L-lysine biosynthesis via DAP pathway; LL-2,6-diaminopimelate from (S)-tetrahydrodipicolinate (succinylase route): step 3/3.</text>
</comment>
<comment type="subunit">
    <text evidence="1">Homodimer.</text>
</comment>
<comment type="similarity">
    <text evidence="1">Belongs to the peptidase M20A family. DapE subfamily.</text>
</comment>
<comment type="sequence caution" evidence="2">
    <conflict type="erroneous initiation">
        <sequence resource="EMBL-CDS" id="ACL59610"/>
    </conflict>
</comment>
<reference key="1">
    <citation type="submission" date="2009-01" db="EMBL/GenBank/DDBJ databases">
        <title>Complete sequence of chromosome of Methylobacterium nodulans ORS 2060.</title>
        <authorList>
            <consortium name="US DOE Joint Genome Institute"/>
            <person name="Lucas S."/>
            <person name="Copeland A."/>
            <person name="Lapidus A."/>
            <person name="Glavina del Rio T."/>
            <person name="Dalin E."/>
            <person name="Tice H."/>
            <person name="Bruce D."/>
            <person name="Goodwin L."/>
            <person name="Pitluck S."/>
            <person name="Sims D."/>
            <person name="Brettin T."/>
            <person name="Detter J.C."/>
            <person name="Han C."/>
            <person name="Larimer F."/>
            <person name="Land M."/>
            <person name="Hauser L."/>
            <person name="Kyrpides N."/>
            <person name="Ivanova N."/>
            <person name="Marx C.J."/>
            <person name="Richardson P."/>
        </authorList>
    </citation>
    <scope>NUCLEOTIDE SEQUENCE [LARGE SCALE GENOMIC DNA]</scope>
    <source>
        <strain>LMG 21967 / CNCM I-2342 / ORS 2060</strain>
    </source>
</reference>
<name>DAPE_METNO</name>
<sequence>MPNTPSPLALTQGLIRCPSVTPAEGGALSLLADLLGAAGFSVERPVFSEPGTPDVENLYARIGTAGPCLLLAGHTDVVPPGDLAAWRHDPFGGVVEEGEVHGRGAVDMKGGIACLAAAILAFLAERGPDFGGSIAFLITGDEEGPAVNGTVKLLAWARQKGERFDHCILAEPTNPDRLGDMIKIGRRGSLTAALTVHGVQGHVAYPHRAENPIPGLIRLAGALLAAPLDAGTAHFDASNLEFTTVDVGNPASNVIPAEARAVFNIRFNDLWTPATLEAELRRRLDAAAGNAVRYTLAVQPTNAVAFLTQPDPFVDLVTAAIEAETGRRPALSTTGGTSDARFIKDACPVIEFGLVGQTMHQIDERAALADLDRLTAIFRRVLDAYFPGDAALQKRA</sequence>
<accession>B8IFQ0</accession>